<proteinExistence type="inferred from homology"/>
<name>VEMP_CVBF</name>
<organismHost>
    <name type="scientific">Bos taurus</name>
    <name type="common">Bovine</name>
    <dbReference type="NCBI Taxonomy" id="9913"/>
</organismHost>
<feature type="chain" id="PRO_0000106085" description="Envelope small membrane protein">
    <location>
        <begin position="1"/>
        <end position="84"/>
    </location>
</feature>
<feature type="topological domain" description="Virion surface" evidence="1">
    <location>
        <begin position="1"/>
        <end position="18"/>
    </location>
</feature>
<feature type="transmembrane region" description="Helical" evidence="1">
    <location>
        <begin position="19"/>
        <end position="39"/>
    </location>
</feature>
<feature type="topological domain" description="Intravirion" evidence="1">
    <location>
        <begin position="40"/>
        <end position="80"/>
    </location>
</feature>
<dbReference type="EMBL" id="X51347">
    <property type="protein sequence ID" value="CAA35741.1"/>
    <property type="molecule type" value="Genomic_RNA"/>
</dbReference>
<dbReference type="PIR" id="S08409">
    <property type="entry name" value="MNIHB3"/>
</dbReference>
<dbReference type="RefSeq" id="NP_150081.1">
    <property type="nucleotide sequence ID" value="NC_003045.1"/>
</dbReference>
<dbReference type="GeneID" id="921685"/>
<dbReference type="KEGG" id="vg:921685"/>
<dbReference type="GO" id="GO:0044178">
    <property type="term" value="C:host cell Golgi membrane"/>
    <property type="evidence" value="ECO:0007669"/>
    <property type="project" value="UniProtKB-SubCell"/>
</dbReference>
<dbReference type="GO" id="GO:0016020">
    <property type="term" value="C:membrane"/>
    <property type="evidence" value="ECO:0007669"/>
    <property type="project" value="UniProtKB-UniRule"/>
</dbReference>
<dbReference type="GO" id="GO:0140975">
    <property type="term" value="P:disruption of cellular anatomical structure in another organism"/>
    <property type="evidence" value="ECO:0007669"/>
    <property type="project" value="UniProtKB-UniRule"/>
</dbReference>
<dbReference type="GO" id="GO:0046760">
    <property type="term" value="P:viral budding from Golgi membrane"/>
    <property type="evidence" value="ECO:0007669"/>
    <property type="project" value="UniProtKB-UniRule"/>
</dbReference>
<dbReference type="CDD" id="cd21532">
    <property type="entry name" value="HKU1-CoV-like_E"/>
    <property type="match status" value="1"/>
</dbReference>
<dbReference type="HAMAP" id="MF_04204">
    <property type="entry name" value="BETA_CORONA_E"/>
    <property type="match status" value="1"/>
</dbReference>
<dbReference type="InterPro" id="IPR043506">
    <property type="entry name" value="E_protein_bCoV"/>
</dbReference>
<dbReference type="InterPro" id="IPR003873">
    <property type="entry name" value="E_protein_CoV"/>
</dbReference>
<dbReference type="Pfam" id="PF02723">
    <property type="entry name" value="CoV_E"/>
    <property type="match status" value="1"/>
</dbReference>
<dbReference type="PROSITE" id="PS51926">
    <property type="entry name" value="COV_E"/>
    <property type="match status" value="1"/>
</dbReference>
<evidence type="ECO:0000255" key="1">
    <source>
        <dbReference type="HAMAP-Rule" id="MF_04204"/>
    </source>
</evidence>
<comment type="function">
    <text evidence="1">Plays a central role in virus morphogenesis and assembly. Acts as a viroporin and self-assembles in host membranes forming pentameric protein-lipid pores that allow ion transport. Also plays a role in the induction of apoptosis.</text>
</comment>
<comment type="subunit">
    <text evidence="1">Homopentamer. Interacts with membrane protein M in the budding compartment of the host cell, which is located between endoplasmic reticulum and the Golgi complex. Interacts with Nucleoprotein.</text>
</comment>
<comment type="subcellular location">
    <subcellularLocation>
        <location evidence="1">Host Golgi apparatus membrane</location>
        <topology evidence="1">Single-pass type III membrane protein</topology>
    </subcellularLocation>
    <text evidence="1">The cytoplasmic tail functions as a Golgi complex-targeting signal.</text>
</comment>
<comment type="similarity">
    <text evidence="1">Belongs to the betacoronaviruses E protein family.</text>
</comment>
<organism>
    <name type="scientific">Bovine coronavirus (strain F15)</name>
    <name type="common">BCoV</name>
    <name type="synonym">BCV</name>
    <dbReference type="NCBI Taxonomy" id="11129"/>
    <lineage>
        <taxon>Viruses</taxon>
        <taxon>Riboviria</taxon>
        <taxon>Orthornavirae</taxon>
        <taxon>Pisuviricota</taxon>
        <taxon>Pisoniviricetes</taxon>
        <taxon>Nidovirales</taxon>
        <taxon>Cornidovirineae</taxon>
        <taxon>Coronaviridae</taxon>
        <taxon>Orthocoronavirinae</taxon>
        <taxon>Betacoronavirus</taxon>
        <taxon>Embecovirus</taxon>
        <taxon>Betacoronavirus 1</taxon>
    </lineage>
</organism>
<keyword id="KW-0053">Apoptosis</keyword>
<keyword id="KW-1040">Host Golgi apparatus</keyword>
<keyword id="KW-1043">Host membrane</keyword>
<keyword id="KW-0472">Membrane</keyword>
<keyword id="KW-0812">Transmembrane</keyword>
<keyword id="KW-1133">Transmembrane helix</keyword>
<sequence>MFMADAYFADTVWYVGQIIFIVAICLLVIIVVVAFLATFKLCIQLCGMCNTLVLSPSIYVFNRGRQFYEFYNDVKPPVLDVDDV</sequence>
<accession>P15775</accession>
<reference key="1">
    <citation type="journal article" date="1990" name="Nucleic Acids Res.">
        <title>Nucleotide sequence of the bovine enteric coronavirus BECV F15 mRNA 5 and mRNA 6 unique regions.</title>
        <authorList>
            <person name="Woloszyn N."/>
            <person name="Boireau P."/>
            <person name="Laporte J."/>
        </authorList>
    </citation>
    <scope>NUCLEOTIDE SEQUENCE [GENOMIC RNA]</scope>
</reference>
<gene>
    <name evidence="1" type="primary">E</name>
    <name type="synonym">sM</name>
    <name type="ORF">5b</name>
</gene>
<protein>
    <recommendedName>
        <fullName evidence="1">Envelope small membrane protein</fullName>
        <shortName evidence="1">E protein</shortName>
        <shortName evidence="1">sM protein</shortName>
    </recommendedName>
</protein>